<feature type="chain" id="PRO_1000117223" description="S-ribosylhomocysteine lyase">
    <location>
        <begin position="1"/>
        <end position="169"/>
    </location>
</feature>
<feature type="binding site" evidence="1">
    <location>
        <position position="54"/>
    </location>
    <ligand>
        <name>Fe cation</name>
        <dbReference type="ChEBI" id="CHEBI:24875"/>
    </ligand>
</feature>
<feature type="binding site" evidence="1">
    <location>
        <position position="58"/>
    </location>
    <ligand>
        <name>Fe cation</name>
        <dbReference type="ChEBI" id="CHEBI:24875"/>
    </ligand>
</feature>
<feature type="binding site" evidence="1">
    <location>
        <position position="128"/>
    </location>
    <ligand>
        <name>Fe cation</name>
        <dbReference type="ChEBI" id="CHEBI:24875"/>
    </ligand>
</feature>
<dbReference type="EC" id="4.4.1.21" evidence="1"/>
<dbReference type="EMBL" id="CP000472">
    <property type="protein sequence ID" value="ACJ27962.1"/>
    <property type="molecule type" value="Genomic_DNA"/>
</dbReference>
<dbReference type="RefSeq" id="WP_020911340.1">
    <property type="nucleotide sequence ID" value="NC_011566.1"/>
</dbReference>
<dbReference type="SMR" id="B8CKC3"/>
<dbReference type="STRING" id="225849.swp_1166"/>
<dbReference type="KEGG" id="swp:swp_1166"/>
<dbReference type="eggNOG" id="COG1854">
    <property type="taxonomic scope" value="Bacteria"/>
</dbReference>
<dbReference type="HOGENOM" id="CLU_107531_2_0_6"/>
<dbReference type="OrthoDB" id="9788129at2"/>
<dbReference type="Proteomes" id="UP000000753">
    <property type="component" value="Chromosome"/>
</dbReference>
<dbReference type="GO" id="GO:0005506">
    <property type="term" value="F:iron ion binding"/>
    <property type="evidence" value="ECO:0007669"/>
    <property type="project" value="InterPro"/>
</dbReference>
<dbReference type="GO" id="GO:0043768">
    <property type="term" value="F:S-ribosylhomocysteine lyase activity"/>
    <property type="evidence" value="ECO:0007669"/>
    <property type="project" value="UniProtKB-UniRule"/>
</dbReference>
<dbReference type="GO" id="GO:0009372">
    <property type="term" value="P:quorum sensing"/>
    <property type="evidence" value="ECO:0007669"/>
    <property type="project" value="UniProtKB-UniRule"/>
</dbReference>
<dbReference type="FunFam" id="3.30.1360.80:FF:000001">
    <property type="entry name" value="S-ribosylhomocysteine lyase"/>
    <property type="match status" value="1"/>
</dbReference>
<dbReference type="Gene3D" id="3.30.1360.80">
    <property type="entry name" value="S-ribosylhomocysteinase (LuxS)"/>
    <property type="match status" value="1"/>
</dbReference>
<dbReference type="HAMAP" id="MF_00091">
    <property type="entry name" value="LuxS"/>
    <property type="match status" value="1"/>
</dbReference>
<dbReference type="InterPro" id="IPR037005">
    <property type="entry name" value="LuxS_sf"/>
</dbReference>
<dbReference type="InterPro" id="IPR011249">
    <property type="entry name" value="Metalloenz_LuxS/M16"/>
</dbReference>
<dbReference type="InterPro" id="IPR003815">
    <property type="entry name" value="S-ribosylhomocysteinase"/>
</dbReference>
<dbReference type="NCBIfam" id="NF002602">
    <property type="entry name" value="PRK02260.1-2"/>
    <property type="match status" value="1"/>
</dbReference>
<dbReference type="PANTHER" id="PTHR35799">
    <property type="entry name" value="S-RIBOSYLHOMOCYSTEINE LYASE"/>
    <property type="match status" value="1"/>
</dbReference>
<dbReference type="PANTHER" id="PTHR35799:SF1">
    <property type="entry name" value="S-RIBOSYLHOMOCYSTEINE LYASE"/>
    <property type="match status" value="1"/>
</dbReference>
<dbReference type="Pfam" id="PF02664">
    <property type="entry name" value="LuxS"/>
    <property type="match status" value="1"/>
</dbReference>
<dbReference type="PIRSF" id="PIRSF006160">
    <property type="entry name" value="AI2"/>
    <property type="match status" value="1"/>
</dbReference>
<dbReference type="PRINTS" id="PR01487">
    <property type="entry name" value="LUXSPROTEIN"/>
</dbReference>
<dbReference type="SUPFAM" id="SSF63411">
    <property type="entry name" value="LuxS/MPP-like metallohydrolase"/>
    <property type="match status" value="1"/>
</dbReference>
<evidence type="ECO:0000255" key="1">
    <source>
        <dbReference type="HAMAP-Rule" id="MF_00091"/>
    </source>
</evidence>
<reference key="1">
    <citation type="journal article" date="2008" name="PLoS ONE">
        <title>Environmental adaptation: genomic analysis of the piezotolerant and psychrotolerant deep-sea iron reducing bacterium Shewanella piezotolerans WP3.</title>
        <authorList>
            <person name="Wang F."/>
            <person name="Wang J."/>
            <person name="Jian H."/>
            <person name="Zhang B."/>
            <person name="Li S."/>
            <person name="Wang F."/>
            <person name="Zeng X."/>
            <person name="Gao L."/>
            <person name="Bartlett D.H."/>
            <person name="Yu J."/>
            <person name="Hu S."/>
            <person name="Xiao X."/>
        </authorList>
    </citation>
    <scope>NUCLEOTIDE SEQUENCE [LARGE SCALE GENOMIC DNA]</scope>
    <source>
        <strain>WP3 / JCM 13877</strain>
    </source>
</reference>
<keyword id="KW-0071">Autoinducer synthesis</keyword>
<keyword id="KW-0408">Iron</keyword>
<keyword id="KW-0456">Lyase</keyword>
<keyword id="KW-0479">Metal-binding</keyword>
<keyword id="KW-0673">Quorum sensing</keyword>
<proteinExistence type="inferred from homology"/>
<gene>
    <name evidence="1" type="primary">luxS</name>
    <name type="ordered locus">swp_1166</name>
</gene>
<sequence>MPLLDSFTVDHTRMNAPAVRVAKSMSTPKGDTITVFDLRFCVPNKQILSERGIHTLEHLFAGFMRDHLNGDNVEIIDISPMGCRTGFYMSLIGAPSESIVADAWLAAMQDVLAVVEQSEIPELNEYQCGTYEMHSLEQAKEIARSIISAGINVNRNDELTLSDEILNGL</sequence>
<name>LUXS_SHEPW</name>
<protein>
    <recommendedName>
        <fullName evidence="1">S-ribosylhomocysteine lyase</fullName>
        <ecNumber evidence="1">4.4.1.21</ecNumber>
    </recommendedName>
    <alternativeName>
        <fullName evidence="1">AI-2 synthesis protein</fullName>
    </alternativeName>
    <alternativeName>
        <fullName evidence="1">Autoinducer-2 production protein LuxS</fullName>
    </alternativeName>
</protein>
<organism>
    <name type="scientific">Shewanella piezotolerans (strain WP3 / JCM 13877)</name>
    <dbReference type="NCBI Taxonomy" id="225849"/>
    <lineage>
        <taxon>Bacteria</taxon>
        <taxon>Pseudomonadati</taxon>
        <taxon>Pseudomonadota</taxon>
        <taxon>Gammaproteobacteria</taxon>
        <taxon>Alteromonadales</taxon>
        <taxon>Shewanellaceae</taxon>
        <taxon>Shewanella</taxon>
    </lineage>
</organism>
<comment type="function">
    <text evidence="1">Involved in the synthesis of autoinducer 2 (AI-2) which is secreted by bacteria and is used to communicate both the cell density and the metabolic potential of the environment. The regulation of gene expression in response to changes in cell density is called quorum sensing. Catalyzes the transformation of S-ribosylhomocysteine (RHC) to homocysteine (HC) and 4,5-dihydroxy-2,3-pentadione (DPD).</text>
</comment>
<comment type="catalytic activity">
    <reaction evidence="1">
        <text>S-(5-deoxy-D-ribos-5-yl)-L-homocysteine = (S)-4,5-dihydroxypentane-2,3-dione + L-homocysteine</text>
        <dbReference type="Rhea" id="RHEA:17753"/>
        <dbReference type="ChEBI" id="CHEBI:29484"/>
        <dbReference type="ChEBI" id="CHEBI:58195"/>
        <dbReference type="ChEBI" id="CHEBI:58199"/>
        <dbReference type="EC" id="4.4.1.21"/>
    </reaction>
</comment>
<comment type="cofactor">
    <cofactor evidence="1">
        <name>Fe cation</name>
        <dbReference type="ChEBI" id="CHEBI:24875"/>
    </cofactor>
    <text evidence="1">Binds 1 Fe cation per subunit.</text>
</comment>
<comment type="subunit">
    <text evidence="1">Homodimer.</text>
</comment>
<comment type="similarity">
    <text evidence="1">Belongs to the LuxS family.</text>
</comment>
<accession>B8CKC3</accession>